<dbReference type="EMBL" id="AE000520">
    <property type="protein sequence ID" value="AAC65306.1"/>
    <property type="molecule type" value="Genomic_DNA"/>
</dbReference>
<dbReference type="RefSeq" id="WP_010881764.1">
    <property type="nucleotide sequence ID" value="NC_021490.2"/>
</dbReference>
<dbReference type="EnsemblBacteria" id="AAC65306">
    <property type="protein sequence ID" value="AAC65306"/>
    <property type="gene ID" value="TP_0315"/>
</dbReference>
<dbReference type="KEGG" id="tpa:TP_0315"/>
<dbReference type="KEGG" id="tpw:TPANIC_0315"/>
<dbReference type="HOGENOM" id="CLU_091716_0_0_12"/>
<dbReference type="Proteomes" id="UP000000811">
    <property type="component" value="Chromosome"/>
</dbReference>
<dbReference type="InterPro" id="IPR024471">
    <property type="entry name" value="DUF2715"/>
</dbReference>
<dbReference type="Pfam" id="PF10895">
    <property type="entry name" value="DUF2715"/>
    <property type="match status" value="1"/>
</dbReference>
<organism>
    <name type="scientific">Treponema pallidum (strain Nichols)</name>
    <dbReference type="NCBI Taxonomy" id="243276"/>
    <lineage>
        <taxon>Bacteria</taxon>
        <taxon>Pseudomonadati</taxon>
        <taxon>Spirochaetota</taxon>
        <taxon>Spirochaetia</taxon>
        <taxon>Spirochaetales</taxon>
        <taxon>Treponemataceae</taxon>
        <taxon>Treponema</taxon>
    </lineage>
</organism>
<gene>
    <name type="ordered locus">TP_0315</name>
</gene>
<sequence>MVRGCRVGQRTGTVGVRVFPVGLCALSLQARDCRGMCGKRLGKVMVLGCMLPGVAARVSLSPKLGVYGDARGGSDLWGICIQAPTMPDTENQAPPRYAPETPLVGLDVAFRAENGFLLQLTVDAALTRLMFCGRCLAGYSFRPGEGSTHLSVAAGFECTALIYDSQHFLSVLGQGLLQPSSSSYSAGNWHRPRSLLGVLTCTAKEVGAIHEESAY</sequence>
<protein>
    <recommendedName>
        <fullName>Uncharacterized protein TP_0315</fullName>
    </recommendedName>
</protein>
<comment type="similarity">
    <text evidence="1">To T.pallidum TP_0127, TP_0618 and TP_0619.</text>
</comment>
<feature type="chain" id="PRO_0000202233" description="Uncharacterized protein TP_0315">
    <location>
        <begin position="1"/>
        <end position="215"/>
    </location>
</feature>
<evidence type="ECO:0000305" key="1"/>
<proteinExistence type="predicted"/>
<reference key="1">
    <citation type="journal article" date="1998" name="Science">
        <title>Complete genome sequence of Treponema pallidum, the syphilis spirochete.</title>
        <authorList>
            <person name="Fraser C.M."/>
            <person name="Norris S.J."/>
            <person name="Weinstock G.M."/>
            <person name="White O."/>
            <person name="Sutton G.G."/>
            <person name="Dodson R.J."/>
            <person name="Gwinn M.L."/>
            <person name="Hickey E.K."/>
            <person name="Clayton R.A."/>
            <person name="Ketchum K.A."/>
            <person name="Sodergren E."/>
            <person name="Hardham J.M."/>
            <person name="McLeod M.P."/>
            <person name="Salzberg S.L."/>
            <person name="Peterson J.D."/>
            <person name="Khalak H.G."/>
            <person name="Richardson D.L."/>
            <person name="Howell J.K."/>
            <person name="Chidambaram M."/>
            <person name="Utterback T.R."/>
            <person name="McDonald L.A."/>
            <person name="Artiach P."/>
            <person name="Bowman C."/>
            <person name="Cotton M.D."/>
            <person name="Fujii C."/>
            <person name="Garland S.A."/>
            <person name="Hatch B."/>
            <person name="Horst K."/>
            <person name="Roberts K.M."/>
            <person name="Sandusky M."/>
            <person name="Weidman J.F."/>
            <person name="Smith H.O."/>
            <person name="Venter J.C."/>
        </authorList>
    </citation>
    <scope>NUCLEOTIDE SEQUENCE [LARGE SCALE GENOMIC DNA]</scope>
    <source>
        <strain>Nichols</strain>
    </source>
</reference>
<keyword id="KW-1185">Reference proteome</keyword>
<name>Y315_TREPA</name>
<accession>P56822</accession>